<protein>
    <recommendedName>
        <fullName>Accumulation-associated protein</fullName>
    </recommendedName>
</protein>
<accession>Q8CQD9</accession>
<proteinExistence type="inferred from homology"/>
<comment type="subcellular location">
    <subcellularLocation>
        <location evidence="3">Secreted</location>
        <location evidence="3">Cell wall</location>
        <topology evidence="3">Peptidoglycan-anchor</topology>
    </subcellularLocation>
</comment>
<sequence>MGKRRQGPINKKVDFLPNKLNKYSIRKFTVGTASILLGSTLIFGSSSHEAKAAEEKQVDPITQANQNDSSERSLENTNQPTVNNEAPQMSSTLQAEEGSNAEAPNVPTIKANSDNDTQTQFSEAPTRNDLARKEDIPAVSKNEELQSSQPNTDSKIEPTTSEPVNLNYSSPFMSLLSMPADSSSNNTKNTIDIPPTTVKGRDNYDFYGRVDIQSNPTDLNATNLTRYNYGQPPGTTTAGAVQFKNQVSFDKDFDFNIRVANNRQSNTTGADGWGFMFSKKDGDDFLKNGGILREKGTPSAAGFRIDTGYYNNDPLDKIQKQAGQGYRGYGTFVKNDSQGNTSKVGSGTPSTDFLNYADNTTNDLDGKFHGQKLNNVNLKYNASNQTFTATYAGKTWTATLSELGLSPTDSYNFLVTSSQYGNGNSGTYADGVMRADLDGATLTYTPKAVDGDPITSTKEIPFNKKREFDPNLAPGTEKVVQKGEPGIETTTTPTYVNPNTGEKVGEGTPTTKITKQPVDEIVHYGGEEIKPGHKDEFDPNAPKGSQTTQPGKPGVKNPDTGEVVTPPVDDVTKYGPVDGDPITSTEEIPFDKKREFNPDLKPGEERVKQKGEPGTKTITTPTTKNPLTGEKVGEGEPTEKITKQPVDEITEYGGEEIKPGHKDEFDPNAPKGSQEDVPGKPGVKNPDTGEVVTPPVDDVTKYGPVDGDPITSTEEIPFDKKREFDPNLAPGTEKVVQKGEPGTKTITTPTTKNPLTGEKVGEGEPTEKITKQPVDEIVHYGGEEIKPGHKDEFDPNAPKGSQEDVPGKPGVKNPDTGEVVTPPVDDVTKYGPVDGDPITSTEEIPFDKKREFNPDLKPGEERVKQKGEPGTKTITTPTTKNPLTGEKVGEGEPTEKVTKQPVDEIVHYGGEEIKPGHKDEFDPNAPKGSQEDVPGKPGVKNPDTGEVVTPPVDDVTKYGPVDGDPITSTEEIPFDKKREFDPNLAPGTEKVVQKGEPGTKTITTPTTKNPLTGEKVGEGEPTEKITKQPVDEIVHYGGEEIKPGHKDEFDPNAPKGSQTTQPGKPGVKNPDTGEVVTPPVDDVTKYGPVDGDPITSTEEIPFDKKREFDPNLAPGTEKVVQKGEPGTKTITTPTTKNPLTGEKVGEGEPTEKITKQPVDEIVHYGGEQIPQGHKDEFDPNAPVDSKTEVPGKPGVKNPDTGEVVTPPVDDVTKYGPKVGNPITSTEEIPFDKKRVFNPDLKPGEERVKQKGEPGTKTITTPILVNPITGEKVGEGKSTEKVTKQPVDEIVEYGPTKAEPGKPAEPGKPAEPGKPAEPGKPAEPGTPAEPGKPAEPGKPAEPGKPAEPGKPAEPGKPAEPGTPAEPGKPAEPGKPAEPGKPAEPGTPAEPGKPAEPGTPAEPGKPAEPGTPTQSGAPEQPNRSMHSTDNKNQLPDTGENRQANEGTLVGSLLAIVGSLFIFGRRKKGNEK</sequence>
<evidence type="ECO:0000255" key="1"/>
<evidence type="ECO:0000255" key="2">
    <source>
        <dbReference type="PROSITE-ProRule" id="PRU00437"/>
    </source>
</evidence>
<evidence type="ECO:0000255" key="3">
    <source>
        <dbReference type="PROSITE-ProRule" id="PRU00477"/>
    </source>
</evidence>
<evidence type="ECO:0000256" key="4">
    <source>
        <dbReference type="SAM" id="MobiDB-lite"/>
    </source>
</evidence>
<reference key="1">
    <citation type="journal article" date="2003" name="Mol. Microbiol.">
        <title>Genome-based analysis of virulence genes in a non-biofilm-forming Staphylococcus epidermidis strain (ATCC 12228).</title>
        <authorList>
            <person name="Zhang Y.-Q."/>
            <person name="Ren S.-X."/>
            <person name="Li H.-L."/>
            <person name="Wang Y.-X."/>
            <person name="Fu G."/>
            <person name="Yang J."/>
            <person name="Qin Z.-Q."/>
            <person name="Miao Y.-G."/>
            <person name="Wang W.-Y."/>
            <person name="Chen R.-S."/>
            <person name="Shen Y."/>
            <person name="Chen Z."/>
            <person name="Yuan Z.-H."/>
            <person name="Zhao G.-P."/>
            <person name="Qu D."/>
            <person name="Danchin A."/>
            <person name="Wen Y.-M."/>
        </authorList>
    </citation>
    <scope>NUCLEOTIDE SEQUENCE [LARGE SCALE GENOMIC DNA]</scope>
    <source>
        <strain>ATCC 12228 / FDA PCI 1200</strain>
    </source>
</reference>
<feature type="signal peptide" evidence="1">
    <location>
        <begin position="1"/>
        <end position="52"/>
    </location>
</feature>
<feature type="chain" id="PRO_0000005641" description="Accumulation-associated protein">
    <location>
        <begin position="53"/>
        <end position="1435"/>
    </location>
</feature>
<feature type="propeptide" id="PRO_0000005642" description="Removed by sortase" evidence="3">
    <location>
        <begin position="1436"/>
        <end position="1469"/>
    </location>
</feature>
<feature type="domain" description="G5 1" evidence="2">
    <location>
        <begin position="446"/>
        <end position="528"/>
    </location>
</feature>
<feature type="domain" description="G5 2" evidence="2">
    <location>
        <begin position="574"/>
        <end position="656"/>
    </location>
</feature>
<feature type="domain" description="G5 3" evidence="2">
    <location>
        <begin position="702"/>
        <end position="784"/>
    </location>
</feature>
<feature type="domain" description="G5 4" evidence="2">
    <location>
        <begin position="830"/>
        <end position="912"/>
    </location>
</feature>
<feature type="domain" description="G5 5" evidence="2">
    <location>
        <begin position="958"/>
        <end position="1040"/>
    </location>
</feature>
<feature type="domain" description="G5 6" evidence="2">
    <location>
        <begin position="1086"/>
        <end position="1168"/>
    </location>
</feature>
<feature type="domain" description="G5 7" evidence="2">
    <location>
        <begin position="1211"/>
        <end position="1296"/>
    </location>
</feature>
<feature type="region of interest" description="Disordered" evidence="4">
    <location>
        <begin position="52"/>
        <end position="164"/>
    </location>
</feature>
<feature type="region of interest" description="Disordered" evidence="4">
    <location>
        <begin position="486"/>
        <end position="511"/>
    </location>
</feature>
<feature type="region of interest" description="Disordered" evidence="4">
    <location>
        <begin position="528"/>
        <end position="1443"/>
    </location>
</feature>
<feature type="short sequence motif" description="LPXTG sorting signal" evidence="3">
    <location>
        <begin position="1432"/>
        <end position="1436"/>
    </location>
</feature>
<feature type="compositionally biased region" description="Polar residues" evidence="4">
    <location>
        <begin position="75"/>
        <end position="94"/>
    </location>
</feature>
<feature type="compositionally biased region" description="Polar residues" evidence="4">
    <location>
        <begin position="110"/>
        <end position="125"/>
    </location>
</feature>
<feature type="compositionally biased region" description="Basic and acidic residues" evidence="4">
    <location>
        <begin position="129"/>
        <end position="144"/>
    </location>
</feature>
<feature type="compositionally biased region" description="Polar residues" evidence="4">
    <location>
        <begin position="145"/>
        <end position="164"/>
    </location>
</feature>
<feature type="compositionally biased region" description="Low complexity" evidence="4">
    <location>
        <begin position="489"/>
        <end position="500"/>
    </location>
</feature>
<feature type="compositionally biased region" description="Basic and acidic residues" evidence="4">
    <location>
        <begin position="528"/>
        <end position="537"/>
    </location>
</feature>
<feature type="compositionally biased region" description="Basic and acidic residues" evidence="4">
    <location>
        <begin position="589"/>
        <end position="613"/>
    </location>
</feature>
<feature type="compositionally biased region" description="Low complexity" evidence="4">
    <location>
        <begin position="614"/>
        <end position="629"/>
    </location>
</feature>
<feature type="compositionally biased region" description="Basic and acidic residues" evidence="4">
    <location>
        <begin position="631"/>
        <end position="646"/>
    </location>
</feature>
<feature type="compositionally biased region" description="Basic and acidic residues" evidence="4">
    <location>
        <begin position="655"/>
        <end position="665"/>
    </location>
</feature>
<feature type="compositionally biased region" description="Low complexity" evidence="4">
    <location>
        <begin position="738"/>
        <end position="757"/>
    </location>
</feature>
<feature type="compositionally biased region" description="Basic and acidic residues" evidence="4">
    <location>
        <begin position="759"/>
        <end position="793"/>
    </location>
</feature>
<feature type="compositionally biased region" description="Basic and acidic residues" evidence="4">
    <location>
        <begin position="845"/>
        <end position="869"/>
    </location>
</feature>
<feature type="compositionally biased region" description="Low complexity" evidence="4">
    <location>
        <begin position="870"/>
        <end position="885"/>
    </location>
</feature>
<feature type="compositionally biased region" description="Basic and acidic residues" evidence="4">
    <location>
        <begin position="887"/>
        <end position="921"/>
    </location>
</feature>
<feature type="compositionally biased region" description="Low complexity" evidence="4">
    <location>
        <begin position="994"/>
        <end position="1013"/>
    </location>
</feature>
<feature type="compositionally biased region" description="Basic and acidic residues" evidence="4">
    <location>
        <begin position="1015"/>
        <end position="1049"/>
    </location>
</feature>
<feature type="compositionally biased region" description="Low complexity" evidence="4">
    <location>
        <begin position="1122"/>
        <end position="1141"/>
    </location>
</feature>
<feature type="compositionally biased region" description="Basic and acidic residues" evidence="4">
    <location>
        <begin position="1143"/>
        <end position="1162"/>
    </location>
</feature>
<feature type="compositionally biased region" description="Basic and acidic residues" evidence="4">
    <location>
        <begin position="1229"/>
        <end position="1253"/>
    </location>
</feature>
<feature type="compositionally biased region" description="Basic and acidic residues" evidence="4">
    <location>
        <begin position="1271"/>
        <end position="1286"/>
    </location>
</feature>
<feature type="compositionally biased region" description="Polar residues" evidence="4">
    <location>
        <begin position="1409"/>
        <end position="1443"/>
    </location>
</feature>
<feature type="modified residue" description="Pentaglycyl murein peptidoglycan amidated threonine" evidence="3">
    <location>
        <position position="1435"/>
    </location>
</feature>
<gene>
    <name type="ordered locus">SE_0175</name>
</gene>
<name>PLS_STAES</name>
<keyword id="KW-0134">Cell wall</keyword>
<keyword id="KW-0572">Peptidoglycan-anchor</keyword>
<keyword id="KW-0677">Repeat</keyword>
<keyword id="KW-0964">Secreted</keyword>
<keyword id="KW-0732">Signal</keyword>
<organism>
    <name type="scientific">Staphylococcus epidermidis (strain ATCC 12228 / FDA PCI 1200)</name>
    <dbReference type="NCBI Taxonomy" id="176280"/>
    <lineage>
        <taxon>Bacteria</taxon>
        <taxon>Bacillati</taxon>
        <taxon>Bacillota</taxon>
        <taxon>Bacilli</taxon>
        <taxon>Bacillales</taxon>
        <taxon>Staphylococcaceae</taxon>
        <taxon>Staphylococcus</taxon>
    </lineage>
</organism>
<dbReference type="EMBL" id="AE015929">
    <property type="protein sequence ID" value="AAO03772.1"/>
    <property type="molecule type" value="Genomic_DNA"/>
</dbReference>
<dbReference type="RefSeq" id="NP_763730.1">
    <property type="nucleotide sequence ID" value="NC_004461.1"/>
</dbReference>
<dbReference type="RefSeq" id="WP_011082576.1">
    <property type="nucleotide sequence ID" value="NC_004461.1"/>
</dbReference>
<dbReference type="SMR" id="Q8CQD9"/>
<dbReference type="KEGG" id="sep:SE_0175"/>
<dbReference type="PATRIC" id="fig|176280.10.peg.160"/>
<dbReference type="eggNOG" id="COG3087">
    <property type="taxonomic scope" value="Bacteria"/>
</dbReference>
<dbReference type="eggNOG" id="COG3583">
    <property type="taxonomic scope" value="Bacteria"/>
</dbReference>
<dbReference type="eggNOG" id="COG4932">
    <property type="taxonomic scope" value="Bacteria"/>
</dbReference>
<dbReference type="HOGENOM" id="CLU_000977_4_1_9"/>
<dbReference type="OrthoDB" id="2414523at2"/>
<dbReference type="Proteomes" id="UP000001411">
    <property type="component" value="Chromosome"/>
</dbReference>
<dbReference type="GO" id="GO:0005576">
    <property type="term" value="C:extracellular region"/>
    <property type="evidence" value="ECO:0007669"/>
    <property type="project" value="UniProtKB-KW"/>
</dbReference>
<dbReference type="Gene3D" id="2.20.230.30">
    <property type="match status" value="3"/>
</dbReference>
<dbReference type="Gene3D" id="2.60.120.200">
    <property type="match status" value="1"/>
</dbReference>
<dbReference type="Gene3D" id="2.20.230.10">
    <property type="entry name" value="Resuscitation-promoting factor rpfb"/>
    <property type="match status" value="3"/>
</dbReference>
<dbReference type="InterPro" id="IPR011098">
    <property type="entry name" value="G5_dom"/>
</dbReference>
<dbReference type="InterPro" id="IPR050436">
    <property type="entry name" value="IsdA"/>
</dbReference>
<dbReference type="InterPro" id="IPR019931">
    <property type="entry name" value="LPXTG_anchor"/>
</dbReference>
<dbReference type="InterPro" id="IPR031477">
    <property type="entry name" value="SasG_E"/>
</dbReference>
<dbReference type="InterPro" id="IPR005877">
    <property type="entry name" value="YSIRK_signal_dom"/>
</dbReference>
<dbReference type="NCBIfam" id="TIGR01167">
    <property type="entry name" value="LPXTG_anchor"/>
    <property type="match status" value="1"/>
</dbReference>
<dbReference type="NCBIfam" id="TIGR01168">
    <property type="entry name" value="YSIRK_signal"/>
    <property type="match status" value="1"/>
</dbReference>
<dbReference type="PANTHER" id="PTHR37824">
    <property type="entry name" value="IRON-REGULATED SURFACE DETERMINANT PROTEIN C"/>
    <property type="match status" value="1"/>
</dbReference>
<dbReference type="PANTHER" id="PTHR37824:SF1">
    <property type="entry name" value="IRON-REGULATED SURFACE DETERMINANT PROTEIN C"/>
    <property type="match status" value="1"/>
</dbReference>
<dbReference type="Pfam" id="PF07501">
    <property type="entry name" value="G5"/>
    <property type="match status" value="7"/>
</dbReference>
<dbReference type="Pfam" id="PF00746">
    <property type="entry name" value="Gram_pos_anchor"/>
    <property type="match status" value="1"/>
</dbReference>
<dbReference type="Pfam" id="PF17041">
    <property type="entry name" value="SasG_E"/>
    <property type="match status" value="6"/>
</dbReference>
<dbReference type="Pfam" id="PF04650">
    <property type="entry name" value="YSIRK_signal"/>
    <property type="match status" value="1"/>
</dbReference>
<dbReference type="SMART" id="SM01208">
    <property type="entry name" value="G5"/>
    <property type="match status" value="7"/>
</dbReference>
<dbReference type="PROSITE" id="PS51109">
    <property type="entry name" value="G5"/>
    <property type="match status" value="7"/>
</dbReference>
<dbReference type="PROSITE" id="PS50847">
    <property type="entry name" value="GRAM_POS_ANCHORING"/>
    <property type="match status" value="1"/>
</dbReference>